<proteinExistence type="inferred from homology"/>
<organism>
    <name type="scientific">Variovorax paradoxus (strain S110)</name>
    <dbReference type="NCBI Taxonomy" id="543728"/>
    <lineage>
        <taxon>Bacteria</taxon>
        <taxon>Pseudomonadati</taxon>
        <taxon>Pseudomonadota</taxon>
        <taxon>Betaproteobacteria</taxon>
        <taxon>Burkholderiales</taxon>
        <taxon>Comamonadaceae</taxon>
        <taxon>Variovorax</taxon>
    </lineage>
</organism>
<name>URE2_VARPS</name>
<gene>
    <name evidence="1" type="primary">ureB</name>
    <name type="ordered locus">Vapar_4242</name>
</gene>
<keyword id="KW-0963">Cytoplasm</keyword>
<keyword id="KW-0378">Hydrolase</keyword>
<evidence type="ECO:0000255" key="1">
    <source>
        <dbReference type="HAMAP-Rule" id="MF_01954"/>
    </source>
</evidence>
<dbReference type="EC" id="3.5.1.5" evidence="1"/>
<dbReference type="EMBL" id="CP001635">
    <property type="protein sequence ID" value="ACS20855.1"/>
    <property type="molecule type" value="Genomic_DNA"/>
</dbReference>
<dbReference type="SMR" id="C5CXZ9"/>
<dbReference type="STRING" id="543728.Vapar_4242"/>
<dbReference type="KEGG" id="vap:Vapar_4242"/>
<dbReference type="eggNOG" id="COG0832">
    <property type="taxonomic scope" value="Bacteria"/>
</dbReference>
<dbReference type="HOGENOM" id="CLU_129707_1_1_4"/>
<dbReference type="OrthoDB" id="9797217at2"/>
<dbReference type="UniPathway" id="UPA00258">
    <property type="reaction ID" value="UER00370"/>
</dbReference>
<dbReference type="GO" id="GO:0035550">
    <property type="term" value="C:urease complex"/>
    <property type="evidence" value="ECO:0007669"/>
    <property type="project" value="InterPro"/>
</dbReference>
<dbReference type="GO" id="GO:0009039">
    <property type="term" value="F:urease activity"/>
    <property type="evidence" value="ECO:0007669"/>
    <property type="project" value="UniProtKB-UniRule"/>
</dbReference>
<dbReference type="GO" id="GO:0043419">
    <property type="term" value="P:urea catabolic process"/>
    <property type="evidence" value="ECO:0007669"/>
    <property type="project" value="UniProtKB-UniRule"/>
</dbReference>
<dbReference type="CDD" id="cd00407">
    <property type="entry name" value="Urease_beta"/>
    <property type="match status" value="1"/>
</dbReference>
<dbReference type="FunFam" id="2.10.150.10:FF:000001">
    <property type="entry name" value="Urease subunit beta"/>
    <property type="match status" value="1"/>
</dbReference>
<dbReference type="Gene3D" id="2.10.150.10">
    <property type="entry name" value="Urease, beta subunit"/>
    <property type="match status" value="1"/>
</dbReference>
<dbReference type="HAMAP" id="MF_01954">
    <property type="entry name" value="Urease_beta"/>
    <property type="match status" value="1"/>
</dbReference>
<dbReference type="InterPro" id="IPR002019">
    <property type="entry name" value="Urease_beta-like"/>
</dbReference>
<dbReference type="InterPro" id="IPR036461">
    <property type="entry name" value="Urease_betasu_sf"/>
</dbReference>
<dbReference type="InterPro" id="IPR050069">
    <property type="entry name" value="Urease_subunit"/>
</dbReference>
<dbReference type="NCBIfam" id="NF009682">
    <property type="entry name" value="PRK13203.1"/>
    <property type="match status" value="1"/>
</dbReference>
<dbReference type="NCBIfam" id="TIGR00192">
    <property type="entry name" value="urease_beta"/>
    <property type="match status" value="1"/>
</dbReference>
<dbReference type="PANTHER" id="PTHR33569">
    <property type="entry name" value="UREASE"/>
    <property type="match status" value="1"/>
</dbReference>
<dbReference type="PANTHER" id="PTHR33569:SF1">
    <property type="entry name" value="UREASE"/>
    <property type="match status" value="1"/>
</dbReference>
<dbReference type="Pfam" id="PF00699">
    <property type="entry name" value="Urease_beta"/>
    <property type="match status" value="1"/>
</dbReference>
<dbReference type="SUPFAM" id="SSF51278">
    <property type="entry name" value="Urease, beta-subunit"/>
    <property type="match status" value="1"/>
</dbReference>
<sequence>MIPGELLTDDGEHTLNPGRRTLTLVVQNTADRPIQVGSHYHFAETNGALGFDRAAARGMRLNIASGAAVRFEPGQQRTVELVDFSGDRIVYGFRGLIQGKL</sequence>
<reference key="1">
    <citation type="journal article" date="2011" name="J. Bacteriol.">
        <title>Complete genome sequence of the metabolically versatile plant growth-promoting endophyte, Variovorax paradoxus S110.</title>
        <authorList>
            <person name="Han J.I."/>
            <person name="Choi H.K."/>
            <person name="Lee S.W."/>
            <person name="Orwin P.M."/>
            <person name="Kim J."/>
            <person name="Laroe S.L."/>
            <person name="Kim T.G."/>
            <person name="O'Neil J."/>
            <person name="Leadbetter J.R."/>
            <person name="Lee S.Y."/>
            <person name="Hur C.G."/>
            <person name="Spain J.C."/>
            <person name="Ovchinnikova G."/>
            <person name="Goodwin L."/>
            <person name="Han C."/>
        </authorList>
    </citation>
    <scope>NUCLEOTIDE SEQUENCE [LARGE SCALE GENOMIC DNA]</scope>
    <source>
        <strain>S110</strain>
    </source>
</reference>
<protein>
    <recommendedName>
        <fullName evidence="1">Urease subunit beta</fullName>
        <ecNumber evidence="1">3.5.1.5</ecNumber>
    </recommendedName>
    <alternativeName>
        <fullName evidence="1">Urea amidohydrolase subunit beta</fullName>
    </alternativeName>
</protein>
<comment type="catalytic activity">
    <reaction evidence="1">
        <text>urea + 2 H2O + H(+) = hydrogencarbonate + 2 NH4(+)</text>
        <dbReference type="Rhea" id="RHEA:20557"/>
        <dbReference type="ChEBI" id="CHEBI:15377"/>
        <dbReference type="ChEBI" id="CHEBI:15378"/>
        <dbReference type="ChEBI" id="CHEBI:16199"/>
        <dbReference type="ChEBI" id="CHEBI:17544"/>
        <dbReference type="ChEBI" id="CHEBI:28938"/>
        <dbReference type="EC" id="3.5.1.5"/>
    </reaction>
</comment>
<comment type="pathway">
    <text evidence="1">Nitrogen metabolism; urea degradation; CO(2) and NH(3) from urea (urease route): step 1/1.</text>
</comment>
<comment type="subunit">
    <text evidence="1">Heterotrimer of UreA (gamma), UreB (beta) and UreC (alpha) subunits. Three heterotrimers associate to form the active enzyme.</text>
</comment>
<comment type="subcellular location">
    <subcellularLocation>
        <location evidence="1">Cytoplasm</location>
    </subcellularLocation>
</comment>
<comment type="similarity">
    <text evidence="1">Belongs to the urease beta subunit family.</text>
</comment>
<feature type="chain" id="PRO_1000216207" description="Urease subunit beta">
    <location>
        <begin position="1"/>
        <end position="101"/>
    </location>
</feature>
<accession>C5CXZ9</accession>